<name>GCSPA_GEODF</name>
<organism>
    <name type="scientific">Geotalea daltonii (strain DSM 22248 / JCM 15807 / FRC-32)</name>
    <name type="common">Geobacter daltonii</name>
    <dbReference type="NCBI Taxonomy" id="316067"/>
    <lineage>
        <taxon>Bacteria</taxon>
        <taxon>Pseudomonadati</taxon>
        <taxon>Thermodesulfobacteriota</taxon>
        <taxon>Desulfuromonadia</taxon>
        <taxon>Geobacterales</taxon>
        <taxon>Geobacteraceae</taxon>
        <taxon>Geotalea</taxon>
    </lineage>
</organism>
<proteinExistence type="inferred from homology"/>
<keyword id="KW-0560">Oxidoreductase</keyword>
<keyword id="KW-1185">Reference proteome</keyword>
<reference key="1">
    <citation type="submission" date="2009-01" db="EMBL/GenBank/DDBJ databases">
        <title>Complete sequence of Geobacter sp. FRC-32.</title>
        <authorList>
            <consortium name="US DOE Joint Genome Institute"/>
            <person name="Lucas S."/>
            <person name="Copeland A."/>
            <person name="Lapidus A."/>
            <person name="Glavina del Rio T."/>
            <person name="Dalin E."/>
            <person name="Tice H."/>
            <person name="Bruce D."/>
            <person name="Goodwin L."/>
            <person name="Pitluck S."/>
            <person name="Saunders E."/>
            <person name="Brettin T."/>
            <person name="Detter J.C."/>
            <person name="Han C."/>
            <person name="Larimer F."/>
            <person name="Land M."/>
            <person name="Hauser L."/>
            <person name="Kyrpides N."/>
            <person name="Ovchinnikova G."/>
            <person name="Kostka J."/>
            <person name="Richardson P."/>
        </authorList>
    </citation>
    <scope>NUCLEOTIDE SEQUENCE [LARGE SCALE GENOMIC DNA]</scope>
    <source>
        <strain>DSM 22248 / JCM 15807 / FRC-32</strain>
    </source>
</reference>
<feature type="chain" id="PRO_1000147986" description="Probable glycine dehydrogenase (decarboxylating) subunit 1">
    <location>
        <begin position="1"/>
        <end position="442"/>
    </location>
</feature>
<protein>
    <recommendedName>
        <fullName evidence="1">Probable glycine dehydrogenase (decarboxylating) subunit 1</fullName>
        <ecNumber evidence="1">1.4.4.2</ecNumber>
    </recommendedName>
    <alternativeName>
        <fullName evidence="1">Glycine cleavage system P-protein subunit 1</fullName>
    </alternativeName>
    <alternativeName>
        <fullName evidence="1">Glycine decarboxylase subunit 1</fullName>
    </alternativeName>
    <alternativeName>
        <fullName evidence="1">Glycine dehydrogenase (aminomethyl-transferring) subunit 1</fullName>
    </alternativeName>
</protein>
<accession>B9M3X6</accession>
<comment type="function">
    <text evidence="1">The glycine cleavage system catalyzes the degradation of glycine. The P protein binds the alpha-amino group of glycine through its pyridoxal phosphate cofactor; CO(2) is released and the remaining methylamine moiety is then transferred to the lipoamide cofactor of the H protein.</text>
</comment>
<comment type="catalytic activity">
    <reaction evidence="1">
        <text>N(6)-[(R)-lipoyl]-L-lysyl-[glycine-cleavage complex H protein] + glycine + H(+) = N(6)-[(R)-S(8)-aminomethyldihydrolipoyl]-L-lysyl-[glycine-cleavage complex H protein] + CO2</text>
        <dbReference type="Rhea" id="RHEA:24304"/>
        <dbReference type="Rhea" id="RHEA-COMP:10494"/>
        <dbReference type="Rhea" id="RHEA-COMP:10495"/>
        <dbReference type="ChEBI" id="CHEBI:15378"/>
        <dbReference type="ChEBI" id="CHEBI:16526"/>
        <dbReference type="ChEBI" id="CHEBI:57305"/>
        <dbReference type="ChEBI" id="CHEBI:83099"/>
        <dbReference type="ChEBI" id="CHEBI:83143"/>
        <dbReference type="EC" id="1.4.4.2"/>
    </reaction>
</comment>
<comment type="subunit">
    <text evidence="1">The glycine cleavage system is composed of four proteins: P, T, L and H. In this organism, the P 'protein' is a heterodimer of two subunits.</text>
</comment>
<comment type="similarity">
    <text evidence="1">Belongs to the GcvP family. N-terminal subunit subfamily.</text>
</comment>
<sequence length="442" mass="47608">MSYCPNTPEDIREMLAAIGKGSVEELFEPIHHTLRAKSFNLPAGISEQELLVKMQELAACDRHLINFIGGGYYDHHIPAVVDHLSGRAEFYTAYTPYQPECSQGTLQALFEYQTAICRLTGMEVSNASLYDGGTALAEAAMMALRITGRNRVVIDASVNPFARQIVATYLKNIGVEMVEIPTSSGSADRSALTEALTGDVAAVMVQNPNFFGSIEDLTAISQAAHAKGALLVTSVYPISLGLIKSPGEMGADIVVGDGQSLGNPLAFGGPSFGFIATTKKYIRNLPGRIIGETIDKEGRRGFVLTLQAREQHIKRHKATSNICSNQSLCALRGLIFLASVGKEGMVELANLNRDKAEYAKERLGSIRGVRVLNRGATFNEFTLELPKDAADVVRTLMEKGIAAGVPLGEYYAGMANCMVVTVTEKRSRGEIEALAEALEASL</sequence>
<dbReference type="EC" id="1.4.4.2" evidence="1"/>
<dbReference type="EMBL" id="CP001390">
    <property type="protein sequence ID" value="ACM19619.1"/>
    <property type="molecule type" value="Genomic_DNA"/>
</dbReference>
<dbReference type="RefSeq" id="WP_012646348.1">
    <property type="nucleotide sequence ID" value="NC_011979.1"/>
</dbReference>
<dbReference type="SMR" id="B9M3X6"/>
<dbReference type="STRING" id="316067.Geob_1259"/>
<dbReference type="KEGG" id="geo:Geob_1259"/>
<dbReference type="eggNOG" id="COG0403">
    <property type="taxonomic scope" value="Bacteria"/>
</dbReference>
<dbReference type="HOGENOM" id="CLU_004620_0_2_7"/>
<dbReference type="OrthoDB" id="9801272at2"/>
<dbReference type="Proteomes" id="UP000007721">
    <property type="component" value="Chromosome"/>
</dbReference>
<dbReference type="GO" id="GO:0004375">
    <property type="term" value="F:glycine dehydrogenase (decarboxylating) activity"/>
    <property type="evidence" value="ECO:0007669"/>
    <property type="project" value="UniProtKB-EC"/>
</dbReference>
<dbReference type="GO" id="GO:0019464">
    <property type="term" value="P:glycine decarboxylation via glycine cleavage system"/>
    <property type="evidence" value="ECO:0007669"/>
    <property type="project" value="UniProtKB-UniRule"/>
</dbReference>
<dbReference type="GO" id="GO:0009116">
    <property type="term" value="P:nucleoside metabolic process"/>
    <property type="evidence" value="ECO:0007669"/>
    <property type="project" value="InterPro"/>
</dbReference>
<dbReference type="CDD" id="cd00613">
    <property type="entry name" value="GDC-P"/>
    <property type="match status" value="1"/>
</dbReference>
<dbReference type="Gene3D" id="3.90.1150.10">
    <property type="entry name" value="Aspartate Aminotransferase, domain 1"/>
    <property type="match status" value="1"/>
</dbReference>
<dbReference type="Gene3D" id="3.40.640.10">
    <property type="entry name" value="Type I PLP-dependent aspartate aminotransferase-like (Major domain)"/>
    <property type="match status" value="1"/>
</dbReference>
<dbReference type="HAMAP" id="MF_00712">
    <property type="entry name" value="GcvPA"/>
    <property type="match status" value="1"/>
</dbReference>
<dbReference type="InterPro" id="IPR023010">
    <property type="entry name" value="GcvPA"/>
</dbReference>
<dbReference type="InterPro" id="IPR049315">
    <property type="entry name" value="GDC-P_N"/>
</dbReference>
<dbReference type="InterPro" id="IPR020581">
    <property type="entry name" value="GDC_P"/>
</dbReference>
<dbReference type="InterPro" id="IPR015424">
    <property type="entry name" value="PyrdxlP-dep_Trfase"/>
</dbReference>
<dbReference type="InterPro" id="IPR015421">
    <property type="entry name" value="PyrdxlP-dep_Trfase_major"/>
</dbReference>
<dbReference type="InterPro" id="IPR015422">
    <property type="entry name" value="PyrdxlP-dep_Trfase_small"/>
</dbReference>
<dbReference type="NCBIfam" id="NF001696">
    <property type="entry name" value="PRK00451.1"/>
    <property type="match status" value="1"/>
</dbReference>
<dbReference type="PANTHER" id="PTHR42806">
    <property type="entry name" value="GLYCINE CLEAVAGE SYSTEM P-PROTEIN"/>
    <property type="match status" value="1"/>
</dbReference>
<dbReference type="PANTHER" id="PTHR42806:SF1">
    <property type="entry name" value="GLYCINE DEHYDROGENASE (DECARBOXYLATING)"/>
    <property type="match status" value="1"/>
</dbReference>
<dbReference type="Pfam" id="PF02347">
    <property type="entry name" value="GDC-P"/>
    <property type="match status" value="1"/>
</dbReference>
<dbReference type="PIRSF" id="PIRSF006815">
    <property type="entry name" value="GcvPA"/>
    <property type="match status" value="1"/>
</dbReference>
<dbReference type="SUPFAM" id="SSF53383">
    <property type="entry name" value="PLP-dependent transferases"/>
    <property type="match status" value="1"/>
</dbReference>
<gene>
    <name evidence="1" type="primary">gcvPA</name>
    <name type="ordered locus">Geob_1259</name>
</gene>
<evidence type="ECO:0000255" key="1">
    <source>
        <dbReference type="HAMAP-Rule" id="MF_00712"/>
    </source>
</evidence>